<comment type="function">
    <text evidence="1">Part of the Tol-Pal system, which plays a role in outer membrane invagination during cell division and is important for maintaining outer membrane integrity. TolB occupies a key intermediary position in the Tol-Pal system because it communicates directly with both membrane-embedded components, Pal in the outer membrane and TolA in the inner membrane.</text>
</comment>
<comment type="subunit">
    <text evidence="1">The Tol-Pal system is composed of five core proteins: the inner membrane proteins TolA, TolQ and TolR, the periplasmic protein TolB and the outer membrane protein Pal. They form a network linking the inner and outer membranes and the peptidoglycan layer.</text>
</comment>
<comment type="subcellular location">
    <subcellularLocation>
        <location evidence="1">Periplasm</location>
    </subcellularLocation>
</comment>
<comment type="similarity">
    <text evidence="1">Belongs to the TolB family.</text>
</comment>
<keyword id="KW-0131">Cell cycle</keyword>
<keyword id="KW-0132">Cell division</keyword>
<keyword id="KW-0574">Periplasm</keyword>
<keyword id="KW-1185">Reference proteome</keyword>
<keyword id="KW-0732">Signal</keyword>
<sequence length="430" mass="45956">MKQALRVAFGFLILWASVLHAEVRIVIDSGVDSGRPIGVVPFQWAGPGAAPEDIGGIVAADLRNSGKFNPLDRARLPQQPGSAQEVQPAAWSALGIDAVVVGQVTPNPDGSYNVAYQLVDTGGAPGTVLAQNSYKVNKQWLRYAGHTASDEVFEKLTGIKGAFRTRIAYVVQTNGGQFPYELRVSDYDGYNQFVVHRSPQPLMSPAWSPDGSKLAYVTFESGRSALVIQTLANGAVRQVASFPRHNGAPAFSPDGSKLAFALSKTGSLNLYVMDLASGQIRQVTDGRSNNTEPTWFPDSQNLAFTSDQAGRPQVYKVNINGGAPQRITWEGSQNQDADVSSDGKFMVMVSSNGGQQHIAKQDLATGGVQVLSSTFLDETPSLAPNGTMVIYSSSQGMGSVLNLVSTDGRFKARLPATDGQVKFPAWSPYL</sequence>
<proteinExistence type="inferred from homology"/>
<name>TOLB_ECO45</name>
<accession>B7MFZ3</accession>
<protein>
    <recommendedName>
        <fullName evidence="1">Tol-Pal system protein TolB</fullName>
    </recommendedName>
</protein>
<feature type="signal peptide" evidence="1">
    <location>
        <begin position="1"/>
        <end position="21"/>
    </location>
</feature>
<feature type="chain" id="PRO_1000131522" description="Tol-Pal system protein TolB" evidence="1">
    <location>
        <begin position="22"/>
        <end position="430"/>
    </location>
</feature>
<dbReference type="EMBL" id="CU928161">
    <property type="protein sequence ID" value="CAR02102.1"/>
    <property type="molecule type" value="Genomic_DNA"/>
</dbReference>
<dbReference type="RefSeq" id="WP_001295307.1">
    <property type="nucleotide sequence ID" value="NC_011742.1"/>
</dbReference>
<dbReference type="SMR" id="B7MFZ3"/>
<dbReference type="GeneID" id="93776744"/>
<dbReference type="KEGG" id="ecz:ECS88_0763"/>
<dbReference type="HOGENOM" id="CLU_047123_0_0_6"/>
<dbReference type="Proteomes" id="UP000000747">
    <property type="component" value="Chromosome"/>
</dbReference>
<dbReference type="GO" id="GO:0042597">
    <property type="term" value="C:periplasmic space"/>
    <property type="evidence" value="ECO:0007669"/>
    <property type="project" value="UniProtKB-SubCell"/>
</dbReference>
<dbReference type="GO" id="GO:0051301">
    <property type="term" value="P:cell division"/>
    <property type="evidence" value="ECO:0007669"/>
    <property type="project" value="UniProtKB-UniRule"/>
</dbReference>
<dbReference type="GO" id="GO:0017038">
    <property type="term" value="P:protein import"/>
    <property type="evidence" value="ECO:0007669"/>
    <property type="project" value="InterPro"/>
</dbReference>
<dbReference type="FunFam" id="2.120.10.30:FF:000022">
    <property type="entry name" value="Tol-Pal system protein TolB"/>
    <property type="match status" value="1"/>
</dbReference>
<dbReference type="FunFam" id="3.40.50.10070:FF:000001">
    <property type="entry name" value="Tol-Pal system protein TolB"/>
    <property type="match status" value="1"/>
</dbReference>
<dbReference type="Gene3D" id="2.120.10.30">
    <property type="entry name" value="TolB, C-terminal domain"/>
    <property type="match status" value="1"/>
</dbReference>
<dbReference type="Gene3D" id="3.40.50.10070">
    <property type="entry name" value="TolB, N-terminal domain"/>
    <property type="match status" value="1"/>
</dbReference>
<dbReference type="HAMAP" id="MF_00671">
    <property type="entry name" value="TolB"/>
    <property type="match status" value="1"/>
</dbReference>
<dbReference type="InterPro" id="IPR011042">
    <property type="entry name" value="6-blade_b-propeller_TolB-like"/>
</dbReference>
<dbReference type="InterPro" id="IPR011659">
    <property type="entry name" value="PD40"/>
</dbReference>
<dbReference type="InterPro" id="IPR014167">
    <property type="entry name" value="Tol-Pal_TolB"/>
</dbReference>
<dbReference type="InterPro" id="IPR007195">
    <property type="entry name" value="TolB_N"/>
</dbReference>
<dbReference type="NCBIfam" id="TIGR02800">
    <property type="entry name" value="propeller_TolB"/>
    <property type="match status" value="1"/>
</dbReference>
<dbReference type="PANTHER" id="PTHR36842:SF1">
    <property type="entry name" value="PROTEIN TOLB"/>
    <property type="match status" value="1"/>
</dbReference>
<dbReference type="PANTHER" id="PTHR36842">
    <property type="entry name" value="PROTEIN TOLB HOMOLOG"/>
    <property type="match status" value="1"/>
</dbReference>
<dbReference type="Pfam" id="PF07676">
    <property type="entry name" value="PD40"/>
    <property type="match status" value="4"/>
</dbReference>
<dbReference type="Pfam" id="PF04052">
    <property type="entry name" value="TolB_N"/>
    <property type="match status" value="1"/>
</dbReference>
<dbReference type="SUPFAM" id="SSF52964">
    <property type="entry name" value="TolB, N-terminal domain"/>
    <property type="match status" value="1"/>
</dbReference>
<dbReference type="SUPFAM" id="SSF69304">
    <property type="entry name" value="Tricorn protease N-terminal domain"/>
    <property type="match status" value="1"/>
</dbReference>
<gene>
    <name evidence="1" type="primary">tolB</name>
    <name type="ordered locus">ECS88_0763</name>
</gene>
<evidence type="ECO:0000255" key="1">
    <source>
        <dbReference type="HAMAP-Rule" id="MF_00671"/>
    </source>
</evidence>
<reference key="1">
    <citation type="journal article" date="2009" name="PLoS Genet.">
        <title>Organised genome dynamics in the Escherichia coli species results in highly diverse adaptive paths.</title>
        <authorList>
            <person name="Touchon M."/>
            <person name="Hoede C."/>
            <person name="Tenaillon O."/>
            <person name="Barbe V."/>
            <person name="Baeriswyl S."/>
            <person name="Bidet P."/>
            <person name="Bingen E."/>
            <person name="Bonacorsi S."/>
            <person name="Bouchier C."/>
            <person name="Bouvet O."/>
            <person name="Calteau A."/>
            <person name="Chiapello H."/>
            <person name="Clermont O."/>
            <person name="Cruveiller S."/>
            <person name="Danchin A."/>
            <person name="Diard M."/>
            <person name="Dossat C."/>
            <person name="Karoui M.E."/>
            <person name="Frapy E."/>
            <person name="Garry L."/>
            <person name="Ghigo J.M."/>
            <person name="Gilles A.M."/>
            <person name="Johnson J."/>
            <person name="Le Bouguenec C."/>
            <person name="Lescat M."/>
            <person name="Mangenot S."/>
            <person name="Martinez-Jehanne V."/>
            <person name="Matic I."/>
            <person name="Nassif X."/>
            <person name="Oztas S."/>
            <person name="Petit M.A."/>
            <person name="Pichon C."/>
            <person name="Rouy Z."/>
            <person name="Ruf C.S."/>
            <person name="Schneider D."/>
            <person name="Tourret J."/>
            <person name="Vacherie B."/>
            <person name="Vallenet D."/>
            <person name="Medigue C."/>
            <person name="Rocha E.P.C."/>
            <person name="Denamur E."/>
        </authorList>
    </citation>
    <scope>NUCLEOTIDE SEQUENCE [LARGE SCALE GENOMIC DNA]</scope>
    <source>
        <strain>S88 / ExPEC</strain>
    </source>
</reference>
<organism>
    <name type="scientific">Escherichia coli O45:K1 (strain S88 / ExPEC)</name>
    <dbReference type="NCBI Taxonomy" id="585035"/>
    <lineage>
        <taxon>Bacteria</taxon>
        <taxon>Pseudomonadati</taxon>
        <taxon>Pseudomonadota</taxon>
        <taxon>Gammaproteobacteria</taxon>
        <taxon>Enterobacterales</taxon>
        <taxon>Enterobacteriaceae</taxon>
        <taxon>Escherichia</taxon>
    </lineage>
</organism>